<organism>
    <name type="scientific">Cyclanthera pedata</name>
    <name type="common">Achocha</name>
    <name type="synonym">Caihua</name>
    <dbReference type="NCBI Taxonomy" id="198836"/>
    <lineage>
        <taxon>Eukaryota</taxon>
        <taxon>Viridiplantae</taxon>
        <taxon>Streptophyta</taxon>
        <taxon>Embryophyta</taxon>
        <taxon>Tracheophyta</taxon>
        <taxon>Spermatophyta</taxon>
        <taxon>Magnoliopsida</taxon>
        <taxon>eudicotyledons</taxon>
        <taxon>Gunneridae</taxon>
        <taxon>Pentapetalae</taxon>
        <taxon>rosids</taxon>
        <taxon>fabids</taxon>
        <taxon>Cucurbitales</taxon>
        <taxon>Cucurbitaceae</taxon>
        <taxon>Sicyoeae</taxon>
        <taxon>Cyclanthera</taxon>
    </lineage>
</organism>
<feature type="peptide" id="PRO_0000044378" description="Trypsin inhibitor 4" evidence="3">
    <location>
        <begin position="1"/>
        <end position="29"/>
    </location>
</feature>
<feature type="site" description="Reactive bond" evidence="3">
    <location>
        <begin position="5"/>
        <end position="6"/>
    </location>
</feature>
<feature type="disulfide bond" evidence="1">
    <location>
        <begin position="3"/>
        <end position="20"/>
    </location>
</feature>
<feature type="disulfide bond" evidence="1">
    <location>
        <begin position="10"/>
        <end position="22"/>
    </location>
</feature>
<feature type="disulfide bond" evidence="1">
    <location>
        <begin position="16"/>
        <end position="28"/>
    </location>
</feature>
<reference evidence="5" key="1">
    <citation type="journal article" date="2006" name="Biochim. Biophys. Acta">
        <title>Isolation and primary structures of seven serine proteinase inhibitors from Cyclanthera pedata seeds.</title>
        <authorList>
            <person name="Kowalska J."/>
            <person name="Zablocka A."/>
            <person name="Wilusz T."/>
        </authorList>
    </citation>
    <scope>PROTEIN SEQUENCE</scope>
    <scope>FUNCTION</scope>
    <scope>REACTIVE SITE</scope>
    <source>
        <tissue evidence="3">Seed</tissue>
    </source>
</reference>
<proteinExistence type="evidence at protein level"/>
<keyword id="KW-0903">Direct protein sequencing</keyword>
<keyword id="KW-1015">Disulfide bond</keyword>
<keyword id="KW-0960">Knottin</keyword>
<keyword id="KW-0646">Protease inhibitor</keyword>
<keyword id="KW-0964">Secreted</keyword>
<keyword id="KW-0722">Serine protease inhibitor</keyword>
<name>ITR4_CYCPE</name>
<accession>P83395</accession>
<dbReference type="SMR" id="P83395"/>
<dbReference type="GO" id="GO:0005576">
    <property type="term" value="C:extracellular region"/>
    <property type="evidence" value="ECO:0007669"/>
    <property type="project" value="UniProtKB-SubCell"/>
</dbReference>
<dbReference type="GO" id="GO:0004867">
    <property type="term" value="F:serine-type endopeptidase inhibitor activity"/>
    <property type="evidence" value="ECO:0007669"/>
    <property type="project" value="UniProtKB-KW"/>
</dbReference>
<dbReference type="CDD" id="cd00150">
    <property type="entry name" value="PlantTI"/>
    <property type="match status" value="1"/>
</dbReference>
<dbReference type="Gene3D" id="4.10.75.20">
    <property type="match status" value="1"/>
</dbReference>
<dbReference type="InterPro" id="IPR000737">
    <property type="entry name" value="Prot_inh_squash"/>
</dbReference>
<dbReference type="InterPro" id="IPR011052">
    <property type="entry name" value="Proteinase_amylase_inhib_sf"/>
</dbReference>
<dbReference type="Pfam" id="PF00299">
    <property type="entry name" value="Squash"/>
    <property type="match status" value="1"/>
</dbReference>
<dbReference type="PRINTS" id="PR00293">
    <property type="entry name" value="SQUASHINHBTR"/>
</dbReference>
<dbReference type="SMART" id="SM00286">
    <property type="entry name" value="PTI"/>
    <property type="match status" value="1"/>
</dbReference>
<dbReference type="SUPFAM" id="SSF57027">
    <property type="entry name" value="Plant inhibitors of proteinases and amylases"/>
    <property type="match status" value="1"/>
</dbReference>
<dbReference type="PROSITE" id="PS00286">
    <property type="entry name" value="SQUASH_INHIBITOR"/>
    <property type="match status" value="1"/>
</dbReference>
<protein>
    <recommendedName>
        <fullName evidence="4">Trypsin inhibitor 4</fullName>
    </recommendedName>
    <alternativeName>
        <fullName evidence="4">CyPTI-IV</fullName>
    </alternativeName>
    <alternativeName>
        <fullName evidence="4">Trypsin inhibitor IV</fullName>
    </alternativeName>
</protein>
<sequence>RICPRILMECKADSDCLAQCICQENGFCG</sequence>
<evidence type="ECO:0000250" key="1">
    <source>
        <dbReference type="UniProtKB" id="P01074"/>
    </source>
</evidence>
<evidence type="ECO:0000255" key="2"/>
<evidence type="ECO:0000269" key="3">
    <source>
    </source>
</evidence>
<evidence type="ECO:0000303" key="4">
    <source>
    </source>
</evidence>
<evidence type="ECO:0000305" key="5"/>
<comment type="function">
    <text evidence="3">Strongly inhibits trypsin, weakly inhibits chymotrypsin.</text>
</comment>
<comment type="subcellular location">
    <subcellularLocation>
        <location evidence="5">Secreted</location>
    </subcellularLocation>
</comment>
<comment type="domain">
    <text evidence="1">The presence of a 'disulfide through disulfide knot' structurally defines this protein as a knottin.</text>
</comment>
<comment type="similarity">
    <text evidence="2">Belongs to the protease inhibitor I7 (squash-type serine protease inhibitor) family.</text>
</comment>